<sequence>MSEKHPGPLVVEGKLTDAERMKLESNYLRGTIAEDLNDGLTGGFKGDNFLLIRFHGMYQQDDRDIRAERAEQKLEPRHAMLLRCRLPGGVITTKQWQAIDKFAGENTIYGSIRLTNRQTFQFHGILKKNVKPVHQMLHSVGLDALATANDMNRNVLCTSNPYESQLHAEAYEWAKKISEHLLPRTRAYAEIWLDQEKVATTDEEPILGQTYLPRKFKTTVVIPPQNDIDLHANDMNFVAIAENGKLVGFNLLVGGGLSIEHGNKKTYARTASEFGYLPLEHTLAVAEAVVTTQRDWGNRTDRKNAKTKYTLERVGVETFKAEVERRAGIKFEPIRPYEFTGRGDRIGWVKGIDDNWHLTLFIENGRILDYPGRPLKTGLLEIAKIHKGDFRITANQNLIIAGVPESEKAKIEKIAKESGLMNAVTPQRENSMACVSFPTCPLAMAEAERFLPSFIDNIDNLMAKHGVSDEHIVMRVTGCPNGCGRAMLAEVGLVGKAPGRYNLHLGGNRIGTRIPRMYKENITEPEILASLDELIGRWAKEREAGEGFGDFTVRAGIIRPVLDPARDLWD</sequence>
<feature type="chain" id="PRO_1000146647" description="Sulfite reductase [NADPH] hemoprotein beta-component">
    <location>
        <begin position="1"/>
        <end position="570"/>
    </location>
</feature>
<feature type="binding site" evidence="1">
    <location>
        <position position="434"/>
    </location>
    <ligand>
        <name>[4Fe-4S] cluster</name>
        <dbReference type="ChEBI" id="CHEBI:49883"/>
    </ligand>
</feature>
<feature type="binding site" evidence="1">
    <location>
        <position position="440"/>
    </location>
    <ligand>
        <name>[4Fe-4S] cluster</name>
        <dbReference type="ChEBI" id="CHEBI:49883"/>
    </ligand>
</feature>
<feature type="binding site" evidence="1">
    <location>
        <position position="479"/>
    </location>
    <ligand>
        <name>[4Fe-4S] cluster</name>
        <dbReference type="ChEBI" id="CHEBI:49883"/>
    </ligand>
</feature>
<feature type="binding site" evidence="1">
    <location>
        <position position="483"/>
    </location>
    <ligand>
        <name>[4Fe-4S] cluster</name>
        <dbReference type="ChEBI" id="CHEBI:49883"/>
    </ligand>
</feature>
<feature type="binding site" description="axial binding residue" evidence="1">
    <location>
        <position position="483"/>
    </location>
    <ligand>
        <name>siroheme</name>
        <dbReference type="ChEBI" id="CHEBI:60052"/>
    </ligand>
    <ligandPart>
        <name>Fe</name>
        <dbReference type="ChEBI" id="CHEBI:18248"/>
    </ligandPart>
</feature>
<gene>
    <name evidence="1" type="primary">cysI</name>
    <name type="ordered locus">ECUMN_3091</name>
</gene>
<accession>B7N6Z7</accession>
<evidence type="ECO:0000255" key="1">
    <source>
        <dbReference type="HAMAP-Rule" id="MF_01540"/>
    </source>
</evidence>
<proteinExistence type="inferred from homology"/>
<comment type="function">
    <text evidence="1">Component of the sulfite reductase complex that catalyzes the 6-electron reduction of sulfite to sulfide. This is one of several activities required for the biosynthesis of L-cysteine from sulfate.</text>
</comment>
<comment type="catalytic activity">
    <reaction evidence="1">
        <text>hydrogen sulfide + 3 NADP(+) + 3 H2O = sulfite + 3 NADPH + 4 H(+)</text>
        <dbReference type="Rhea" id="RHEA:13801"/>
        <dbReference type="ChEBI" id="CHEBI:15377"/>
        <dbReference type="ChEBI" id="CHEBI:15378"/>
        <dbReference type="ChEBI" id="CHEBI:17359"/>
        <dbReference type="ChEBI" id="CHEBI:29919"/>
        <dbReference type="ChEBI" id="CHEBI:57783"/>
        <dbReference type="ChEBI" id="CHEBI:58349"/>
        <dbReference type="EC" id="1.8.1.2"/>
    </reaction>
</comment>
<comment type="cofactor">
    <cofactor evidence="1">
        <name>siroheme</name>
        <dbReference type="ChEBI" id="CHEBI:60052"/>
    </cofactor>
    <text evidence="1">Binds 1 siroheme per subunit.</text>
</comment>
<comment type="cofactor">
    <cofactor evidence="1">
        <name>[4Fe-4S] cluster</name>
        <dbReference type="ChEBI" id="CHEBI:49883"/>
    </cofactor>
    <text evidence="1">Binds 1 [4Fe-4S] cluster per subunit.</text>
</comment>
<comment type="pathway">
    <text evidence="1">Sulfur metabolism; hydrogen sulfide biosynthesis; hydrogen sulfide from sulfite (NADPH route): step 1/1.</text>
</comment>
<comment type="subunit">
    <text evidence="1">Alpha(8)-beta(8). The alpha component is a flavoprotein, the beta component is a hemoprotein.</text>
</comment>
<comment type="similarity">
    <text evidence="1">Belongs to the nitrite and sulfite reductase 4Fe-4S domain family.</text>
</comment>
<dbReference type="EC" id="1.8.1.2" evidence="1"/>
<dbReference type="EMBL" id="CU928163">
    <property type="protein sequence ID" value="CAR14258.1"/>
    <property type="molecule type" value="Genomic_DNA"/>
</dbReference>
<dbReference type="RefSeq" id="WP_001290706.1">
    <property type="nucleotide sequence ID" value="NC_011751.1"/>
</dbReference>
<dbReference type="RefSeq" id="YP_002413778.1">
    <property type="nucleotide sequence ID" value="NC_011751.1"/>
</dbReference>
<dbReference type="SMR" id="B7N6Z7"/>
<dbReference type="STRING" id="585056.ECUMN_3091"/>
<dbReference type="GeneID" id="75205593"/>
<dbReference type="KEGG" id="eum:ECUMN_3091"/>
<dbReference type="PATRIC" id="fig|585056.7.peg.3268"/>
<dbReference type="HOGENOM" id="CLU_001975_3_2_6"/>
<dbReference type="UniPathway" id="UPA00140">
    <property type="reaction ID" value="UER00207"/>
</dbReference>
<dbReference type="Proteomes" id="UP000007097">
    <property type="component" value="Chromosome"/>
</dbReference>
<dbReference type="GO" id="GO:0009337">
    <property type="term" value="C:sulfite reductase complex (NADPH)"/>
    <property type="evidence" value="ECO:0007669"/>
    <property type="project" value="InterPro"/>
</dbReference>
<dbReference type="GO" id="GO:0051539">
    <property type="term" value="F:4 iron, 4 sulfur cluster binding"/>
    <property type="evidence" value="ECO:0007669"/>
    <property type="project" value="UniProtKB-KW"/>
</dbReference>
<dbReference type="GO" id="GO:0020037">
    <property type="term" value="F:heme binding"/>
    <property type="evidence" value="ECO:0007669"/>
    <property type="project" value="InterPro"/>
</dbReference>
<dbReference type="GO" id="GO:0046872">
    <property type="term" value="F:metal ion binding"/>
    <property type="evidence" value="ECO:0007669"/>
    <property type="project" value="UniProtKB-KW"/>
</dbReference>
<dbReference type="GO" id="GO:0050661">
    <property type="term" value="F:NADP binding"/>
    <property type="evidence" value="ECO:0007669"/>
    <property type="project" value="InterPro"/>
</dbReference>
<dbReference type="GO" id="GO:0050311">
    <property type="term" value="F:sulfite reductase (ferredoxin) activity"/>
    <property type="evidence" value="ECO:0007669"/>
    <property type="project" value="TreeGrafter"/>
</dbReference>
<dbReference type="GO" id="GO:0004783">
    <property type="term" value="F:sulfite reductase (NADPH) activity"/>
    <property type="evidence" value="ECO:0007669"/>
    <property type="project" value="UniProtKB-UniRule"/>
</dbReference>
<dbReference type="GO" id="GO:0019344">
    <property type="term" value="P:cysteine biosynthetic process"/>
    <property type="evidence" value="ECO:0007669"/>
    <property type="project" value="UniProtKB-KW"/>
</dbReference>
<dbReference type="GO" id="GO:0070814">
    <property type="term" value="P:hydrogen sulfide biosynthetic process"/>
    <property type="evidence" value="ECO:0007669"/>
    <property type="project" value="UniProtKB-UniRule"/>
</dbReference>
<dbReference type="GO" id="GO:0000103">
    <property type="term" value="P:sulfate assimilation"/>
    <property type="evidence" value="ECO:0007669"/>
    <property type="project" value="UniProtKB-UniRule"/>
</dbReference>
<dbReference type="FunFam" id="3.30.413.10:FF:000003">
    <property type="entry name" value="Sulfite reductase [NADPH] hemoprotein beta-component"/>
    <property type="match status" value="1"/>
</dbReference>
<dbReference type="FunFam" id="3.30.413.10:FF:000004">
    <property type="entry name" value="Sulfite reductase [NADPH] hemoprotein beta-component"/>
    <property type="match status" value="1"/>
</dbReference>
<dbReference type="Gene3D" id="3.30.413.10">
    <property type="entry name" value="Sulfite Reductase Hemoprotein, domain 1"/>
    <property type="match status" value="2"/>
</dbReference>
<dbReference type="HAMAP" id="MF_01540">
    <property type="entry name" value="CysI"/>
    <property type="match status" value="1"/>
</dbReference>
<dbReference type="InterPro" id="IPR011786">
    <property type="entry name" value="CysI"/>
</dbReference>
<dbReference type="InterPro" id="IPR005117">
    <property type="entry name" value="NiRdtase/SiRdtase_haem-b_fer"/>
</dbReference>
<dbReference type="InterPro" id="IPR036136">
    <property type="entry name" value="Nit/Sulf_reduc_fer-like_dom_sf"/>
</dbReference>
<dbReference type="InterPro" id="IPR006067">
    <property type="entry name" value="NO2/SO3_Rdtase_4Fe4S_dom"/>
</dbReference>
<dbReference type="InterPro" id="IPR045169">
    <property type="entry name" value="NO2/SO3_Rdtase_4Fe4S_prot"/>
</dbReference>
<dbReference type="InterPro" id="IPR045854">
    <property type="entry name" value="NO2/SO3_Rdtase_4Fe4S_sf"/>
</dbReference>
<dbReference type="InterPro" id="IPR006066">
    <property type="entry name" value="NO2/SO3_Rdtase_FeS/sirohaem_BS"/>
</dbReference>
<dbReference type="NCBIfam" id="TIGR02041">
    <property type="entry name" value="CysI"/>
    <property type="match status" value="1"/>
</dbReference>
<dbReference type="NCBIfam" id="NF010029">
    <property type="entry name" value="PRK13504.1"/>
    <property type="match status" value="1"/>
</dbReference>
<dbReference type="PANTHER" id="PTHR11493:SF47">
    <property type="entry name" value="SULFITE REDUCTASE [NADPH] SUBUNIT BETA"/>
    <property type="match status" value="1"/>
</dbReference>
<dbReference type="PANTHER" id="PTHR11493">
    <property type="entry name" value="SULFITE REDUCTASE [NADPH] SUBUNIT BETA-RELATED"/>
    <property type="match status" value="1"/>
</dbReference>
<dbReference type="Pfam" id="PF01077">
    <property type="entry name" value="NIR_SIR"/>
    <property type="match status" value="1"/>
</dbReference>
<dbReference type="Pfam" id="PF03460">
    <property type="entry name" value="NIR_SIR_ferr"/>
    <property type="match status" value="2"/>
</dbReference>
<dbReference type="PRINTS" id="PR00397">
    <property type="entry name" value="SIROHAEM"/>
</dbReference>
<dbReference type="SUPFAM" id="SSF56014">
    <property type="entry name" value="Nitrite and sulphite reductase 4Fe-4S domain-like"/>
    <property type="match status" value="2"/>
</dbReference>
<dbReference type="SUPFAM" id="SSF55124">
    <property type="entry name" value="Nitrite/Sulfite reductase N-terminal domain-like"/>
    <property type="match status" value="2"/>
</dbReference>
<dbReference type="PROSITE" id="PS00365">
    <property type="entry name" value="NIR_SIR"/>
    <property type="match status" value="1"/>
</dbReference>
<organism>
    <name type="scientific">Escherichia coli O17:K52:H18 (strain UMN026 / ExPEC)</name>
    <dbReference type="NCBI Taxonomy" id="585056"/>
    <lineage>
        <taxon>Bacteria</taxon>
        <taxon>Pseudomonadati</taxon>
        <taxon>Pseudomonadota</taxon>
        <taxon>Gammaproteobacteria</taxon>
        <taxon>Enterobacterales</taxon>
        <taxon>Enterobacteriaceae</taxon>
        <taxon>Escherichia</taxon>
    </lineage>
</organism>
<protein>
    <recommendedName>
        <fullName evidence="1">Sulfite reductase [NADPH] hemoprotein beta-component</fullName>
        <shortName evidence="1">SiR-HP</shortName>
        <shortName evidence="1">SiRHP</shortName>
        <ecNumber evidence="1">1.8.1.2</ecNumber>
    </recommendedName>
</protein>
<reference key="1">
    <citation type="journal article" date="2009" name="PLoS Genet.">
        <title>Organised genome dynamics in the Escherichia coli species results in highly diverse adaptive paths.</title>
        <authorList>
            <person name="Touchon M."/>
            <person name="Hoede C."/>
            <person name="Tenaillon O."/>
            <person name="Barbe V."/>
            <person name="Baeriswyl S."/>
            <person name="Bidet P."/>
            <person name="Bingen E."/>
            <person name="Bonacorsi S."/>
            <person name="Bouchier C."/>
            <person name="Bouvet O."/>
            <person name="Calteau A."/>
            <person name="Chiapello H."/>
            <person name="Clermont O."/>
            <person name="Cruveiller S."/>
            <person name="Danchin A."/>
            <person name="Diard M."/>
            <person name="Dossat C."/>
            <person name="Karoui M.E."/>
            <person name="Frapy E."/>
            <person name="Garry L."/>
            <person name="Ghigo J.M."/>
            <person name="Gilles A.M."/>
            <person name="Johnson J."/>
            <person name="Le Bouguenec C."/>
            <person name="Lescat M."/>
            <person name="Mangenot S."/>
            <person name="Martinez-Jehanne V."/>
            <person name="Matic I."/>
            <person name="Nassif X."/>
            <person name="Oztas S."/>
            <person name="Petit M.A."/>
            <person name="Pichon C."/>
            <person name="Rouy Z."/>
            <person name="Ruf C.S."/>
            <person name="Schneider D."/>
            <person name="Tourret J."/>
            <person name="Vacherie B."/>
            <person name="Vallenet D."/>
            <person name="Medigue C."/>
            <person name="Rocha E.P.C."/>
            <person name="Denamur E."/>
        </authorList>
    </citation>
    <scope>NUCLEOTIDE SEQUENCE [LARGE SCALE GENOMIC DNA]</scope>
    <source>
        <strain>UMN026 / ExPEC</strain>
    </source>
</reference>
<name>CYSI_ECOLU</name>
<keyword id="KW-0004">4Fe-4S</keyword>
<keyword id="KW-0028">Amino-acid biosynthesis</keyword>
<keyword id="KW-0198">Cysteine biosynthesis</keyword>
<keyword id="KW-0349">Heme</keyword>
<keyword id="KW-0408">Iron</keyword>
<keyword id="KW-0411">Iron-sulfur</keyword>
<keyword id="KW-0479">Metal-binding</keyword>
<keyword id="KW-0521">NADP</keyword>
<keyword id="KW-0560">Oxidoreductase</keyword>